<accession>B7M4D4</accession>
<reference key="1">
    <citation type="journal article" date="2009" name="PLoS Genet.">
        <title>Organised genome dynamics in the Escherichia coli species results in highly diverse adaptive paths.</title>
        <authorList>
            <person name="Touchon M."/>
            <person name="Hoede C."/>
            <person name="Tenaillon O."/>
            <person name="Barbe V."/>
            <person name="Baeriswyl S."/>
            <person name="Bidet P."/>
            <person name="Bingen E."/>
            <person name="Bonacorsi S."/>
            <person name="Bouchier C."/>
            <person name="Bouvet O."/>
            <person name="Calteau A."/>
            <person name="Chiapello H."/>
            <person name="Clermont O."/>
            <person name="Cruveiller S."/>
            <person name="Danchin A."/>
            <person name="Diard M."/>
            <person name="Dossat C."/>
            <person name="Karoui M.E."/>
            <person name="Frapy E."/>
            <person name="Garry L."/>
            <person name="Ghigo J.M."/>
            <person name="Gilles A.M."/>
            <person name="Johnson J."/>
            <person name="Le Bouguenec C."/>
            <person name="Lescat M."/>
            <person name="Mangenot S."/>
            <person name="Martinez-Jehanne V."/>
            <person name="Matic I."/>
            <person name="Nassif X."/>
            <person name="Oztas S."/>
            <person name="Petit M.A."/>
            <person name="Pichon C."/>
            <person name="Rouy Z."/>
            <person name="Ruf C.S."/>
            <person name="Schneider D."/>
            <person name="Tourret J."/>
            <person name="Vacherie B."/>
            <person name="Vallenet D."/>
            <person name="Medigue C."/>
            <person name="Rocha E.P.C."/>
            <person name="Denamur E."/>
        </authorList>
    </citation>
    <scope>NUCLEOTIDE SEQUENCE [LARGE SCALE GENOMIC DNA]</scope>
    <source>
        <strain>IAI1</strain>
    </source>
</reference>
<proteinExistence type="inferred from homology"/>
<organism>
    <name type="scientific">Escherichia coli O8 (strain IAI1)</name>
    <dbReference type="NCBI Taxonomy" id="585034"/>
    <lineage>
        <taxon>Bacteria</taxon>
        <taxon>Pseudomonadati</taxon>
        <taxon>Pseudomonadota</taxon>
        <taxon>Gammaproteobacteria</taxon>
        <taxon>Enterobacterales</taxon>
        <taxon>Enterobacteriaceae</taxon>
        <taxon>Escherichia</taxon>
    </lineage>
</organism>
<keyword id="KW-0240">DNA-directed RNA polymerase</keyword>
<keyword id="KW-0548">Nucleotidyltransferase</keyword>
<keyword id="KW-0804">Transcription</keyword>
<keyword id="KW-0808">Transferase</keyword>
<dbReference type="EC" id="2.7.7.6" evidence="1"/>
<dbReference type="EMBL" id="CU928160">
    <property type="protein sequence ID" value="CAR00618.1"/>
    <property type="molecule type" value="Genomic_DNA"/>
</dbReference>
<dbReference type="RefSeq" id="WP_000135058.1">
    <property type="nucleotide sequence ID" value="NC_011741.1"/>
</dbReference>
<dbReference type="SMR" id="B7M4D4"/>
<dbReference type="GeneID" id="98390719"/>
<dbReference type="KEGG" id="ecr:ECIAI1_3821"/>
<dbReference type="HOGENOM" id="CLU_125406_5_3_6"/>
<dbReference type="GO" id="GO:0000428">
    <property type="term" value="C:DNA-directed RNA polymerase complex"/>
    <property type="evidence" value="ECO:0007669"/>
    <property type="project" value="UniProtKB-KW"/>
</dbReference>
<dbReference type="GO" id="GO:0003677">
    <property type="term" value="F:DNA binding"/>
    <property type="evidence" value="ECO:0007669"/>
    <property type="project" value="UniProtKB-UniRule"/>
</dbReference>
<dbReference type="GO" id="GO:0003899">
    <property type="term" value="F:DNA-directed RNA polymerase activity"/>
    <property type="evidence" value="ECO:0007669"/>
    <property type="project" value="UniProtKB-UniRule"/>
</dbReference>
<dbReference type="GO" id="GO:0006351">
    <property type="term" value="P:DNA-templated transcription"/>
    <property type="evidence" value="ECO:0007669"/>
    <property type="project" value="UniProtKB-UniRule"/>
</dbReference>
<dbReference type="FunFam" id="3.90.940.10:FF:000001">
    <property type="entry name" value="DNA-directed RNA polymerase subunit omega"/>
    <property type="match status" value="1"/>
</dbReference>
<dbReference type="Gene3D" id="3.90.940.10">
    <property type="match status" value="1"/>
</dbReference>
<dbReference type="HAMAP" id="MF_00366">
    <property type="entry name" value="RNApol_bact_RpoZ"/>
    <property type="match status" value="1"/>
</dbReference>
<dbReference type="InterPro" id="IPR003716">
    <property type="entry name" value="DNA-dir_RNA_pol_omega"/>
</dbReference>
<dbReference type="InterPro" id="IPR006110">
    <property type="entry name" value="Pol_omega/Rpo6/RPB6"/>
</dbReference>
<dbReference type="InterPro" id="IPR036161">
    <property type="entry name" value="RPB6/omega-like_sf"/>
</dbReference>
<dbReference type="NCBIfam" id="TIGR00690">
    <property type="entry name" value="rpoZ"/>
    <property type="match status" value="1"/>
</dbReference>
<dbReference type="PANTHER" id="PTHR34476">
    <property type="entry name" value="DNA-DIRECTED RNA POLYMERASE SUBUNIT OMEGA"/>
    <property type="match status" value="1"/>
</dbReference>
<dbReference type="PANTHER" id="PTHR34476:SF1">
    <property type="entry name" value="DNA-DIRECTED RNA POLYMERASE SUBUNIT OMEGA"/>
    <property type="match status" value="1"/>
</dbReference>
<dbReference type="Pfam" id="PF01192">
    <property type="entry name" value="RNA_pol_Rpb6"/>
    <property type="match status" value="1"/>
</dbReference>
<dbReference type="SMART" id="SM01409">
    <property type="entry name" value="RNA_pol_Rpb6"/>
    <property type="match status" value="1"/>
</dbReference>
<dbReference type="SUPFAM" id="SSF63562">
    <property type="entry name" value="RPB6/omega subunit-like"/>
    <property type="match status" value="1"/>
</dbReference>
<gene>
    <name evidence="1" type="primary">rpoZ</name>
    <name type="ordered locus">ECIAI1_3821</name>
</gene>
<sequence length="91" mass="10237">MARVTVQDAVEKIGNRFDLVLVAARRARQMQVGGKDPLVPEENDKTTVIALREIEEGLINNQILDVRERQEQQEQEAAELQAVTAIAEGRR</sequence>
<comment type="function">
    <text evidence="1">Promotes RNA polymerase assembly. Latches the N- and C-terminal regions of the beta' subunit thereby facilitating its interaction with the beta and alpha subunits.</text>
</comment>
<comment type="catalytic activity">
    <reaction evidence="1">
        <text>RNA(n) + a ribonucleoside 5'-triphosphate = RNA(n+1) + diphosphate</text>
        <dbReference type="Rhea" id="RHEA:21248"/>
        <dbReference type="Rhea" id="RHEA-COMP:14527"/>
        <dbReference type="Rhea" id="RHEA-COMP:17342"/>
        <dbReference type="ChEBI" id="CHEBI:33019"/>
        <dbReference type="ChEBI" id="CHEBI:61557"/>
        <dbReference type="ChEBI" id="CHEBI:140395"/>
        <dbReference type="EC" id="2.7.7.6"/>
    </reaction>
</comment>
<comment type="subunit">
    <text evidence="1">The RNAP catalytic core consists of 2 alpha, 1 beta, 1 beta' and 1 omega subunit. When a sigma factor is associated with the core the holoenzyme is formed, which can initiate transcription.</text>
</comment>
<comment type="similarity">
    <text evidence="1">Belongs to the RNA polymerase subunit omega family.</text>
</comment>
<feature type="chain" id="PRO_1000121218" description="DNA-directed RNA polymerase subunit omega">
    <location>
        <begin position="1"/>
        <end position="91"/>
    </location>
</feature>
<protein>
    <recommendedName>
        <fullName evidence="1">DNA-directed RNA polymerase subunit omega</fullName>
        <shortName evidence="1">RNAP omega subunit</shortName>
        <ecNumber evidence="1">2.7.7.6</ecNumber>
    </recommendedName>
    <alternativeName>
        <fullName evidence="1">RNA polymerase omega subunit</fullName>
    </alternativeName>
    <alternativeName>
        <fullName evidence="1">Transcriptase subunit omega</fullName>
    </alternativeName>
</protein>
<name>RPOZ_ECO8A</name>
<evidence type="ECO:0000255" key="1">
    <source>
        <dbReference type="HAMAP-Rule" id="MF_00366"/>
    </source>
</evidence>